<organism>
    <name type="scientific">Arabidopsis thaliana</name>
    <name type="common">Mouse-ear cress</name>
    <dbReference type="NCBI Taxonomy" id="3702"/>
    <lineage>
        <taxon>Eukaryota</taxon>
        <taxon>Viridiplantae</taxon>
        <taxon>Streptophyta</taxon>
        <taxon>Embryophyta</taxon>
        <taxon>Tracheophyta</taxon>
        <taxon>Spermatophyta</taxon>
        <taxon>Magnoliopsida</taxon>
        <taxon>eudicotyledons</taxon>
        <taxon>Gunneridae</taxon>
        <taxon>Pentapetalae</taxon>
        <taxon>rosids</taxon>
        <taxon>malvids</taxon>
        <taxon>Brassicales</taxon>
        <taxon>Brassicaceae</taxon>
        <taxon>Camelineae</taxon>
        <taxon>Arabidopsis</taxon>
    </lineage>
</organism>
<evidence type="ECO:0000250" key="1">
    <source>
        <dbReference type="UniProtKB" id="C0LGT6"/>
    </source>
</evidence>
<evidence type="ECO:0000250" key="2">
    <source>
        <dbReference type="UniProtKB" id="O22476"/>
    </source>
</evidence>
<evidence type="ECO:0000250" key="3">
    <source>
        <dbReference type="UniProtKB" id="Q9M0G7"/>
    </source>
</evidence>
<evidence type="ECO:0000255" key="4"/>
<evidence type="ECO:0000255" key="5">
    <source>
        <dbReference type="PROSITE-ProRule" id="PRU00159"/>
    </source>
</evidence>
<evidence type="ECO:0000305" key="6"/>
<protein>
    <recommendedName>
        <fullName>Probably inactive leucine-rich repeat receptor-like protein kinase At5g06940</fullName>
    </recommendedName>
</protein>
<sequence>MATRFKHQFSISLALTFFFFFTKTFSFTENEELGNLLRFKASFDDPKGSLSGWFNTSSSHHCNWTGITCTRAPTLYVSSINLQSLNLSGEISDSICDLPYLTHLDLSLNFFNQPIPLQLSRCVTLETLNLSSNLIWGTIPDQISEFSSLKVIDFSSNHVEGMIPEDLGLLFNLQVLNLGSNLLTGIVPPAIGKLSELVVLDLSENSYLVSEIPSFLGKLDKLEQLLLHRSGFHGEIPTSFVGLTSLRTLDLSLNNLSGEIPRSLGPSLKNLVSLDVSQNKLSGSFPSGICSGKRLINLSLHSNFFEGSLPNSIGECLSLERLQVQNNGFSGEFPVVLWKLPRIKIIRADNNRFTGQVPESVSLASALEQVEIVNNSFSGEIPHGLGLVKSLYKFSASQNRFSGELPPNFCDSPVLSIVNISHNRLLGKIPELKNCKKLVSLSLAGNAFTGEIPPSLADLHVLTYLDLSDNSLTGLIPQGLQNLKLALFNVSFNGLSGEVPHSLVSGLPASFLQGNPELCGPGLPNSCSSDRSNFHKKGGKALVLSLICLALAIATFLAVLYRYSRKKVQFKSTWRSEFYYPFKLTEHELMKVVNESCPSGSEVYVLSLSSGELLAVKKLVNSKNISSKSLKAQVRTIAKIRHKNITRILGFCFKDEMIFLIYEFTQNGSLHDMLSRAGDQLPWSIRLKIALGVAQALAYISKDYVPHLLHRNLKSANIFLDKDFEPKLSDFALDHIVGETAFQSLVHANTNSCYTAPENHYSKKATEDMDVYSFGVVLLELVTGQSAEKAEEGSSGESLDIVKQVRRKINLTDGAAQVLDQKILSDSCQSDMRKTLDIALDCTAVAAEKRPSLVKVIKLLEGISSSVSPVSA</sequence>
<accession>Q9FL51</accession>
<keyword id="KW-0067">ATP-binding</keyword>
<keyword id="KW-0325">Glycoprotein</keyword>
<keyword id="KW-0433">Leucine-rich repeat</keyword>
<keyword id="KW-0472">Membrane</keyword>
<keyword id="KW-0547">Nucleotide-binding</keyword>
<keyword id="KW-0597">Phosphoprotein</keyword>
<keyword id="KW-0675">Receptor</keyword>
<keyword id="KW-1185">Reference proteome</keyword>
<keyword id="KW-0677">Repeat</keyword>
<keyword id="KW-0732">Signal</keyword>
<keyword id="KW-0808">Transferase</keyword>
<keyword id="KW-0812">Transmembrane</keyword>
<keyword id="KW-1133">Transmembrane helix</keyword>
<dbReference type="EMBL" id="AB010697">
    <property type="protein sequence ID" value="BAB11152.1"/>
    <property type="molecule type" value="Genomic_DNA"/>
</dbReference>
<dbReference type="EMBL" id="CP002688">
    <property type="protein sequence ID" value="AED91084.1"/>
    <property type="molecule type" value="Genomic_DNA"/>
</dbReference>
<dbReference type="RefSeq" id="NP_196311.1">
    <property type="nucleotide sequence ID" value="NM_120776.2"/>
</dbReference>
<dbReference type="SMR" id="Q9FL51"/>
<dbReference type="FunCoup" id="Q9FL51">
    <property type="interactions" value="211"/>
</dbReference>
<dbReference type="STRING" id="3702.Q9FL51"/>
<dbReference type="GlyGen" id="Q9FL51">
    <property type="glycosylation" value="9 sites"/>
</dbReference>
<dbReference type="PaxDb" id="3702-AT5G06940.1"/>
<dbReference type="ProteomicsDB" id="243164"/>
<dbReference type="EnsemblPlants" id="AT5G06940.1">
    <property type="protein sequence ID" value="AT5G06940.1"/>
    <property type="gene ID" value="AT5G06940"/>
</dbReference>
<dbReference type="GeneID" id="830585"/>
<dbReference type="Gramene" id="AT5G06940.1">
    <property type="protein sequence ID" value="AT5G06940.1"/>
    <property type="gene ID" value="AT5G06940"/>
</dbReference>
<dbReference type="KEGG" id="ath:AT5G06940"/>
<dbReference type="Araport" id="AT5G06940"/>
<dbReference type="TAIR" id="AT5G06940"/>
<dbReference type="eggNOG" id="KOG1187">
    <property type="taxonomic scope" value="Eukaryota"/>
</dbReference>
<dbReference type="HOGENOM" id="CLU_000288_22_1_1"/>
<dbReference type="InParanoid" id="Q9FL51"/>
<dbReference type="OMA" id="EPLCRVP"/>
<dbReference type="PhylomeDB" id="Q9FL51"/>
<dbReference type="PRO" id="PR:Q9FL51"/>
<dbReference type="Proteomes" id="UP000006548">
    <property type="component" value="Chromosome 5"/>
</dbReference>
<dbReference type="ExpressionAtlas" id="Q9FL51">
    <property type="expression patterns" value="baseline and differential"/>
</dbReference>
<dbReference type="GO" id="GO:0016020">
    <property type="term" value="C:membrane"/>
    <property type="evidence" value="ECO:0007669"/>
    <property type="project" value="UniProtKB-SubCell"/>
</dbReference>
<dbReference type="GO" id="GO:0005524">
    <property type="term" value="F:ATP binding"/>
    <property type="evidence" value="ECO:0007669"/>
    <property type="project" value="UniProtKB-KW"/>
</dbReference>
<dbReference type="GO" id="GO:0004672">
    <property type="term" value="F:protein kinase activity"/>
    <property type="evidence" value="ECO:0007669"/>
    <property type="project" value="InterPro"/>
</dbReference>
<dbReference type="FunFam" id="3.80.10.10:FF:000516">
    <property type="entry name" value="Leucine-rich repeat family protein"/>
    <property type="match status" value="1"/>
</dbReference>
<dbReference type="FunFam" id="1.10.510.10:FF:000388">
    <property type="entry name" value="Leucine-rich repeat receptor-like tyrosine-protein kinase PXC3"/>
    <property type="match status" value="1"/>
</dbReference>
<dbReference type="FunFam" id="3.80.10.10:FF:000534">
    <property type="entry name" value="Probably inactive leucine-rich repeat receptor-like protein kinase At5g06940"/>
    <property type="match status" value="1"/>
</dbReference>
<dbReference type="FunFam" id="3.30.200.20:FF:000652">
    <property type="entry name" value="probably inactive leucine-rich repeat receptor-like protein kinase At5g06940"/>
    <property type="match status" value="1"/>
</dbReference>
<dbReference type="Gene3D" id="3.30.200.20">
    <property type="entry name" value="Phosphorylase Kinase, domain 1"/>
    <property type="match status" value="1"/>
</dbReference>
<dbReference type="Gene3D" id="3.80.10.10">
    <property type="entry name" value="Ribonuclease Inhibitor"/>
    <property type="match status" value="3"/>
</dbReference>
<dbReference type="Gene3D" id="1.10.510.10">
    <property type="entry name" value="Transferase(Phosphotransferase) domain 1"/>
    <property type="match status" value="1"/>
</dbReference>
<dbReference type="InterPro" id="IPR011009">
    <property type="entry name" value="Kinase-like_dom_sf"/>
</dbReference>
<dbReference type="InterPro" id="IPR001611">
    <property type="entry name" value="Leu-rich_rpt"/>
</dbReference>
<dbReference type="InterPro" id="IPR003591">
    <property type="entry name" value="Leu-rich_rpt_typical-subtyp"/>
</dbReference>
<dbReference type="InterPro" id="IPR032675">
    <property type="entry name" value="LRR_dom_sf"/>
</dbReference>
<dbReference type="InterPro" id="IPR013210">
    <property type="entry name" value="LRR_N_plant-typ"/>
</dbReference>
<dbReference type="InterPro" id="IPR050647">
    <property type="entry name" value="Plant_LRR-RLKs"/>
</dbReference>
<dbReference type="InterPro" id="IPR000719">
    <property type="entry name" value="Prot_kinase_dom"/>
</dbReference>
<dbReference type="InterPro" id="IPR001245">
    <property type="entry name" value="Ser-Thr/Tyr_kinase_cat_dom"/>
</dbReference>
<dbReference type="PANTHER" id="PTHR48056">
    <property type="entry name" value="LRR RECEPTOR-LIKE SERINE/THREONINE-PROTEIN KINASE-RELATED"/>
    <property type="match status" value="1"/>
</dbReference>
<dbReference type="PANTHER" id="PTHR48056:SF31">
    <property type="entry name" value="PROTEIN KINASE DOMAIN-CONTAINING PROTEIN"/>
    <property type="match status" value="1"/>
</dbReference>
<dbReference type="Pfam" id="PF00560">
    <property type="entry name" value="LRR_1"/>
    <property type="match status" value="6"/>
</dbReference>
<dbReference type="Pfam" id="PF08263">
    <property type="entry name" value="LRRNT_2"/>
    <property type="match status" value="1"/>
</dbReference>
<dbReference type="Pfam" id="PF07714">
    <property type="entry name" value="PK_Tyr_Ser-Thr"/>
    <property type="match status" value="1"/>
</dbReference>
<dbReference type="SMART" id="SM00369">
    <property type="entry name" value="LRR_TYP"/>
    <property type="match status" value="5"/>
</dbReference>
<dbReference type="SUPFAM" id="SSF52058">
    <property type="entry name" value="L domain-like"/>
    <property type="match status" value="2"/>
</dbReference>
<dbReference type="SUPFAM" id="SSF56112">
    <property type="entry name" value="Protein kinase-like (PK-like)"/>
    <property type="match status" value="1"/>
</dbReference>
<dbReference type="PROSITE" id="PS50011">
    <property type="entry name" value="PROTEIN_KINASE_DOM"/>
    <property type="match status" value="1"/>
</dbReference>
<gene>
    <name type="ordered locus">At5g06940</name>
    <name type="ORF">MOJ9.11</name>
</gene>
<feature type="signal peptide" evidence="4">
    <location>
        <begin position="1"/>
        <end position="26"/>
    </location>
</feature>
<feature type="chain" id="PRO_0000389455" description="Probably inactive leucine-rich repeat receptor-like protein kinase At5g06940">
    <location>
        <begin position="27"/>
        <end position="872"/>
    </location>
</feature>
<feature type="topological domain" description="Extracellular" evidence="4">
    <location>
        <begin position="27"/>
        <end position="540"/>
    </location>
</feature>
<feature type="transmembrane region" description="Helical" evidence="4">
    <location>
        <begin position="541"/>
        <end position="561"/>
    </location>
</feature>
<feature type="topological domain" description="Cytoplasmic" evidence="4">
    <location>
        <begin position="562"/>
        <end position="872"/>
    </location>
</feature>
<feature type="repeat" description="LRR 1">
    <location>
        <begin position="79"/>
        <end position="98"/>
    </location>
</feature>
<feature type="repeat" description="LRR 2">
    <location>
        <begin position="99"/>
        <end position="122"/>
    </location>
</feature>
<feature type="repeat" description="LRR 3">
    <location>
        <begin position="123"/>
        <end position="146"/>
    </location>
</feature>
<feature type="repeat" description="LRR 4">
    <location>
        <begin position="147"/>
        <end position="169"/>
    </location>
</feature>
<feature type="repeat" description="LRR 5">
    <location>
        <begin position="171"/>
        <end position="193"/>
    </location>
</feature>
<feature type="repeat" description="LRR 6">
    <location>
        <begin position="195"/>
        <end position="217"/>
    </location>
</feature>
<feature type="repeat" description="LRR 7">
    <location>
        <begin position="219"/>
        <end position="243"/>
    </location>
</feature>
<feature type="repeat" description="LRR 8">
    <location>
        <begin position="244"/>
        <end position="267"/>
    </location>
</feature>
<feature type="repeat" description="LRR 9">
    <location>
        <begin position="269"/>
        <end position="292"/>
    </location>
</feature>
<feature type="repeat" description="LRR 10">
    <location>
        <begin position="294"/>
        <end position="316"/>
    </location>
</feature>
<feature type="repeat" description="LRR 11">
    <location>
        <begin position="317"/>
        <end position="340"/>
    </location>
</feature>
<feature type="repeat" description="LRR 12">
    <location>
        <begin position="341"/>
        <end position="365"/>
    </location>
</feature>
<feature type="repeat" description="LRR 13">
    <location>
        <begin position="367"/>
        <end position="389"/>
    </location>
</feature>
<feature type="repeat" description="LRR 14">
    <location>
        <begin position="391"/>
        <end position="412"/>
    </location>
</feature>
<feature type="repeat" description="LRR 15">
    <location>
        <begin position="413"/>
        <end position="435"/>
    </location>
</feature>
<feature type="repeat" description="LRR 16">
    <location>
        <begin position="436"/>
        <end position="459"/>
    </location>
</feature>
<feature type="repeat" description="LRR 17">
    <location>
        <begin position="460"/>
        <end position="482"/>
    </location>
</feature>
<feature type="repeat" description="LRR 18">
    <location>
        <begin position="484"/>
        <end position="506"/>
    </location>
</feature>
<feature type="domain" description="Protein kinase" evidence="5">
    <location>
        <begin position="589"/>
        <end position="863"/>
    </location>
</feature>
<feature type="binding site" evidence="5">
    <location>
        <begin position="595"/>
        <end position="603"/>
    </location>
    <ligand>
        <name>ATP</name>
        <dbReference type="ChEBI" id="CHEBI:30616"/>
    </ligand>
</feature>
<feature type="binding site" evidence="5">
    <location>
        <position position="617"/>
    </location>
    <ligand>
        <name>ATP</name>
        <dbReference type="ChEBI" id="CHEBI:30616"/>
    </ligand>
</feature>
<feature type="modified residue" description="Phosphothreonine" evidence="2">
    <location>
        <position position="585"/>
    </location>
</feature>
<feature type="modified residue" description="Phosphotyrosine" evidence="2">
    <location>
        <position position="662"/>
    </location>
</feature>
<feature type="modified residue" description="Phosphotyrosine" evidence="1">
    <location>
        <position position="699"/>
    </location>
</feature>
<feature type="modified residue" description="Phosphotyrosine" evidence="1">
    <location>
        <position position="754"/>
    </location>
</feature>
<feature type="modified residue" description="Phosphotyrosine" evidence="3">
    <location>
        <position position="761"/>
    </location>
</feature>
<feature type="glycosylation site" description="N-linked (GlcNAc...) asparagine" evidence="4">
    <location>
        <position position="55"/>
    </location>
</feature>
<feature type="glycosylation site" description="N-linked (GlcNAc...) asparagine" evidence="4">
    <location>
        <position position="63"/>
    </location>
</feature>
<feature type="glycosylation site" description="N-linked (GlcNAc...) asparagine" evidence="4">
    <location>
        <position position="86"/>
    </location>
</feature>
<feature type="glycosylation site" description="N-linked (GlcNAc...) asparagine" evidence="4">
    <location>
        <position position="129"/>
    </location>
</feature>
<feature type="glycosylation site" description="N-linked (GlcNAc...) asparagine" evidence="4">
    <location>
        <position position="255"/>
    </location>
</feature>
<feature type="glycosylation site" description="N-linked (GlcNAc...) asparagine" evidence="4">
    <location>
        <position position="297"/>
    </location>
</feature>
<feature type="glycosylation site" description="N-linked (GlcNAc...) asparagine" evidence="4">
    <location>
        <position position="374"/>
    </location>
</feature>
<feature type="glycosylation site" description="N-linked (GlcNAc...) asparagine" evidence="4">
    <location>
        <position position="419"/>
    </location>
</feature>
<feature type="glycosylation site" description="N-linked (GlcNAc...) asparagine" evidence="4">
    <location>
        <position position="489"/>
    </location>
</feature>
<proteinExistence type="inferred from homology"/>
<name>Y5694_ARATH</name>
<comment type="subcellular location">
    <subcellularLocation>
        <location evidence="6">Membrane</location>
        <topology evidence="6">Single-pass type I membrane protein</topology>
    </subcellularLocation>
</comment>
<comment type="domain">
    <text>The protein kinase domain is predicted to be catalytically inactive. Lacks the conserved Asp active site at position 712, which is replaced by an Asn residue.</text>
</comment>
<comment type="similarity">
    <text evidence="5">Belongs to the protein kinase superfamily. Ser/Thr protein kinase family.</text>
</comment>
<reference key="1">
    <citation type="journal article" date="1998" name="DNA Res.">
        <title>Structural analysis of Arabidopsis thaliana chromosome 5. V. Sequence features of the regions of 1,381,565 bp covered by twenty one physically assigned P1 and TAC clones.</title>
        <authorList>
            <person name="Kaneko T."/>
            <person name="Kotani H."/>
            <person name="Nakamura Y."/>
            <person name="Sato S."/>
            <person name="Asamizu E."/>
            <person name="Miyajima N."/>
            <person name="Tabata S."/>
        </authorList>
    </citation>
    <scope>NUCLEOTIDE SEQUENCE [LARGE SCALE GENOMIC DNA]</scope>
    <source>
        <strain>cv. Columbia</strain>
    </source>
</reference>
<reference key="2">
    <citation type="journal article" date="2017" name="Plant J.">
        <title>Araport11: a complete reannotation of the Arabidopsis thaliana reference genome.</title>
        <authorList>
            <person name="Cheng C.Y."/>
            <person name="Krishnakumar V."/>
            <person name="Chan A.P."/>
            <person name="Thibaud-Nissen F."/>
            <person name="Schobel S."/>
            <person name="Town C.D."/>
        </authorList>
    </citation>
    <scope>GENOME REANNOTATION</scope>
    <source>
        <strain>cv. Columbia</strain>
    </source>
</reference>